<proteinExistence type="inferred from homology"/>
<evidence type="ECO:0000255" key="1">
    <source>
        <dbReference type="HAMAP-Rule" id="MF_00113"/>
    </source>
</evidence>
<protein>
    <recommendedName>
        <fullName evidence="1">S-adenosylmethionine:tRNA ribosyltransferase-isomerase</fullName>
        <ecNumber evidence="1">2.4.99.17</ecNumber>
    </recommendedName>
    <alternativeName>
        <fullName evidence="1">Queuosine biosynthesis protein QueA</fullName>
    </alternativeName>
</protein>
<dbReference type="EC" id="2.4.99.17" evidence="1"/>
<dbReference type="EMBL" id="CP001638">
    <property type="protein sequence ID" value="ACS25214.1"/>
    <property type="molecule type" value="Genomic_DNA"/>
</dbReference>
<dbReference type="SMR" id="C5D5E6"/>
<dbReference type="STRING" id="471223.GWCH70_2519"/>
<dbReference type="KEGG" id="gwc:GWCH70_2519"/>
<dbReference type="eggNOG" id="COG0809">
    <property type="taxonomic scope" value="Bacteria"/>
</dbReference>
<dbReference type="HOGENOM" id="CLU_039110_1_0_9"/>
<dbReference type="OrthoDB" id="9805933at2"/>
<dbReference type="UniPathway" id="UPA00392"/>
<dbReference type="GO" id="GO:0005737">
    <property type="term" value="C:cytoplasm"/>
    <property type="evidence" value="ECO:0007669"/>
    <property type="project" value="UniProtKB-SubCell"/>
</dbReference>
<dbReference type="GO" id="GO:0051075">
    <property type="term" value="F:S-adenosylmethionine:tRNA ribosyltransferase-isomerase activity"/>
    <property type="evidence" value="ECO:0007669"/>
    <property type="project" value="UniProtKB-EC"/>
</dbReference>
<dbReference type="GO" id="GO:0008616">
    <property type="term" value="P:queuosine biosynthetic process"/>
    <property type="evidence" value="ECO:0007669"/>
    <property type="project" value="UniProtKB-UniRule"/>
</dbReference>
<dbReference type="GO" id="GO:0002099">
    <property type="term" value="P:tRNA wobble guanine modification"/>
    <property type="evidence" value="ECO:0007669"/>
    <property type="project" value="TreeGrafter"/>
</dbReference>
<dbReference type="FunFam" id="2.40.10.240:FF:000002">
    <property type="entry name" value="S-adenosylmethionine:tRNA ribosyltransferase-isomerase"/>
    <property type="match status" value="1"/>
</dbReference>
<dbReference type="FunFam" id="3.40.1780.10:FF:000001">
    <property type="entry name" value="S-adenosylmethionine:tRNA ribosyltransferase-isomerase"/>
    <property type="match status" value="1"/>
</dbReference>
<dbReference type="Gene3D" id="2.40.10.240">
    <property type="entry name" value="QueA-like"/>
    <property type="match status" value="1"/>
</dbReference>
<dbReference type="Gene3D" id="3.40.1780.10">
    <property type="entry name" value="QueA-like"/>
    <property type="match status" value="1"/>
</dbReference>
<dbReference type="HAMAP" id="MF_00113">
    <property type="entry name" value="QueA"/>
    <property type="match status" value="1"/>
</dbReference>
<dbReference type="InterPro" id="IPR003699">
    <property type="entry name" value="QueA"/>
</dbReference>
<dbReference type="InterPro" id="IPR042118">
    <property type="entry name" value="QueA_dom1"/>
</dbReference>
<dbReference type="InterPro" id="IPR042119">
    <property type="entry name" value="QueA_dom2"/>
</dbReference>
<dbReference type="InterPro" id="IPR036100">
    <property type="entry name" value="QueA_sf"/>
</dbReference>
<dbReference type="NCBIfam" id="NF001140">
    <property type="entry name" value="PRK00147.1"/>
    <property type="match status" value="1"/>
</dbReference>
<dbReference type="NCBIfam" id="TIGR00113">
    <property type="entry name" value="queA"/>
    <property type="match status" value="1"/>
</dbReference>
<dbReference type="PANTHER" id="PTHR30307">
    <property type="entry name" value="S-ADENOSYLMETHIONINE:TRNA RIBOSYLTRANSFERASE-ISOMERASE"/>
    <property type="match status" value="1"/>
</dbReference>
<dbReference type="PANTHER" id="PTHR30307:SF0">
    <property type="entry name" value="S-ADENOSYLMETHIONINE:TRNA RIBOSYLTRANSFERASE-ISOMERASE"/>
    <property type="match status" value="1"/>
</dbReference>
<dbReference type="Pfam" id="PF02547">
    <property type="entry name" value="Queuosine_synth"/>
    <property type="match status" value="1"/>
</dbReference>
<dbReference type="SUPFAM" id="SSF111337">
    <property type="entry name" value="QueA-like"/>
    <property type="match status" value="1"/>
</dbReference>
<keyword id="KW-0963">Cytoplasm</keyword>
<keyword id="KW-0671">Queuosine biosynthesis</keyword>
<keyword id="KW-0949">S-adenosyl-L-methionine</keyword>
<keyword id="KW-0808">Transferase</keyword>
<reference key="1">
    <citation type="submission" date="2009-06" db="EMBL/GenBank/DDBJ databases">
        <title>Complete sequence of chromosome of Geopacillus sp. WCH70.</title>
        <authorList>
            <consortium name="US DOE Joint Genome Institute"/>
            <person name="Lucas S."/>
            <person name="Copeland A."/>
            <person name="Lapidus A."/>
            <person name="Glavina del Rio T."/>
            <person name="Dalin E."/>
            <person name="Tice H."/>
            <person name="Bruce D."/>
            <person name="Goodwin L."/>
            <person name="Pitluck S."/>
            <person name="Chertkov O."/>
            <person name="Brettin T."/>
            <person name="Detter J.C."/>
            <person name="Han C."/>
            <person name="Larimer F."/>
            <person name="Land M."/>
            <person name="Hauser L."/>
            <person name="Kyrpides N."/>
            <person name="Mikhailova N."/>
            <person name="Brumm P."/>
            <person name="Mead D.A."/>
            <person name="Richardson P."/>
        </authorList>
    </citation>
    <scope>NUCLEOTIDE SEQUENCE [LARGE SCALE GENOMIC DNA]</scope>
    <source>
        <strain>WCH70</strain>
    </source>
</reference>
<sequence>MKIDLFDFDLPEELIAQTPLPNRDASRLMVLDKKTGEIRHETFRNILSYLHEGDCLVLNDTRVMPARLYGEKENTGANIEVLLLKQLEGDRWETLVKPAKRVKVGTEITFGDGRLKATCVDTLEHGGRILEFSYQGIFYEVLEQLGEMPLPPYIKEKLDDPERYQTVYAREVGSAAAPTAGLHFTEQLLDDIRAKGVHIAFITLHVGLGTFRPVSVENIEEHDMHAEFYQMTEETARLLNEVRQQGGRIIAVGTTSTRTLETIASKHNGAFVAESGWTDIFIYPGYEFKAIDGLVTNFHLPKSTLIMLVSALAGRENILRAYNAAVKERYRFFSFGDAMLII</sequence>
<comment type="function">
    <text evidence="1">Transfers and isomerizes the ribose moiety from AdoMet to the 7-aminomethyl group of 7-deazaguanine (preQ1-tRNA) to give epoxyqueuosine (oQ-tRNA).</text>
</comment>
<comment type="catalytic activity">
    <reaction evidence="1">
        <text>7-aminomethyl-7-carbaguanosine(34) in tRNA + S-adenosyl-L-methionine = epoxyqueuosine(34) in tRNA + adenine + L-methionine + 2 H(+)</text>
        <dbReference type="Rhea" id="RHEA:32155"/>
        <dbReference type="Rhea" id="RHEA-COMP:10342"/>
        <dbReference type="Rhea" id="RHEA-COMP:18582"/>
        <dbReference type="ChEBI" id="CHEBI:15378"/>
        <dbReference type="ChEBI" id="CHEBI:16708"/>
        <dbReference type="ChEBI" id="CHEBI:57844"/>
        <dbReference type="ChEBI" id="CHEBI:59789"/>
        <dbReference type="ChEBI" id="CHEBI:82833"/>
        <dbReference type="ChEBI" id="CHEBI:194443"/>
        <dbReference type="EC" id="2.4.99.17"/>
    </reaction>
</comment>
<comment type="pathway">
    <text evidence="1">tRNA modification; tRNA-queuosine biosynthesis.</text>
</comment>
<comment type="subunit">
    <text evidence="1">Monomer.</text>
</comment>
<comment type="subcellular location">
    <subcellularLocation>
        <location evidence="1">Cytoplasm</location>
    </subcellularLocation>
</comment>
<comment type="similarity">
    <text evidence="1">Belongs to the QueA family.</text>
</comment>
<feature type="chain" id="PRO_1000202953" description="S-adenosylmethionine:tRNA ribosyltransferase-isomerase">
    <location>
        <begin position="1"/>
        <end position="342"/>
    </location>
</feature>
<gene>
    <name evidence="1" type="primary">queA</name>
    <name type="ordered locus">GWCH70_2519</name>
</gene>
<accession>C5D5E6</accession>
<organism>
    <name type="scientific">Geobacillus sp. (strain WCH70)</name>
    <dbReference type="NCBI Taxonomy" id="471223"/>
    <lineage>
        <taxon>Bacteria</taxon>
        <taxon>Bacillati</taxon>
        <taxon>Bacillota</taxon>
        <taxon>Bacilli</taxon>
        <taxon>Bacillales</taxon>
        <taxon>Anoxybacillaceae</taxon>
        <taxon>Geobacillus</taxon>
    </lineage>
</organism>
<name>QUEA_GEOSW</name>